<proteinExistence type="evidence at protein level"/>
<accession>Q5B153</accession>
<accession>C8VFL3</accession>
<accession>Q1HFS6</accession>
<feature type="signal peptide" evidence="2">
    <location>
        <begin position="1"/>
        <end position="17"/>
    </location>
</feature>
<feature type="chain" id="PRO_0000394951" description="Arabinogalactan endo-beta-1,4-galactanase A">
    <location>
        <begin position="18"/>
        <end position="350"/>
    </location>
</feature>
<feature type="active site" description="Proton donor" evidence="1">
    <location>
        <position position="153"/>
    </location>
</feature>
<feature type="active site" description="Nucleophile" evidence="1">
    <location>
        <position position="263"/>
    </location>
</feature>
<feature type="glycosylation site" description="N-linked (GlcNAc...) asparagine" evidence="2">
    <location>
        <position position="129"/>
    </location>
</feature>
<feature type="strand" evidence="5">
    <location>
        <begin position="20"/>
        <end position="25"/>
    </location>
</feature>
<feature type="helix" evidence="5">
    <location>
        <begin position="29"/>
        <end position="34"/>
    </location>
</feature>
<feature type="helix" evidence="5">
    <location>
        <begin position="49"/>
        <end position="55"/>
    </location>
</feature>
<feature type="strand" evidence="5">
    <location>
        <begin position="60"/>
        <end position="65"/>
    </location>
</feature>
<feature type="helix" evidence="5">
    <location>
        <begin position="76"/>
        <end position="88"/>
    </location>
</feature>
<feature type="strand" evidence="5">
    <location>
        <begin position="92"/>
        <end position="97"/>
    </location>
</feature>
<feature type="strand" evidence="5">
    <location>
        <begin position="100"/>
        <end position="102"/>
    </location>
</feature>
<feature type="helix" evidence="5">
    <location>
        <begin position="120"/>
        <end position="140"/>
    </location>
</feature>
<feature type="strand" evidence="5">
    <location>
        <begin position="146"/>
        <end position="153"/>
    </location>
</feature>
<feature type="helix" evidence="5">
    <location>
        <begin position="154"/>
        <end position="156"/>
    </location>
</feature>
<feature type="strand" evidence="5">
    <location>
        <begin position="158"/>
        <end position="160"/>
    </location>
</feature>
<feature type="turn" evidence="5">
    <location>
        <begin position="161"/>
        <end position="163"/>
    </location>
</feature>
<feature type="helix" evidence="5">
    <location>
        <begin position="168"/>
        <end position="183"/>
    </location>
</feature>
<feature type="strand" evidence="5">
    <location>
        <begin position="192"/>
        <end position="198"/>
    </location>
</feature>
<feature type="helix" evidence="5">
    <location>
        <begin position="203"/>
        <end position="215"/>
    </location>
</feature>
<feature type="strand" evidence="5">
    <location>
        <begin position="217"/>
        <end position="219"/>
    </location>
</feature>
<feature type="strand" evidence="5">
    <location>
        <begin position="226"/>
        <end position="230"/>
    </location>
</feature>
<feature type="strand" evidence="5">
    <location>
        <begin position="233"/>
        <end position="235"/>
    </location>
</feature>
<feature type="helix" evidence="5">
    <location>
        <begin position="241"/>
        <end position="255"/>
    </location>
</feature>
<feature type="strand" evidence="5">
    <location>
        <begin position="258"/>
        <end position="263"/>
    </location>
</feature>
<feature type="helix" evidence="5">
    <location>
        <begin position="279"/>
        <end position="281"/>
    </location>
</feature>
<feature type="helix" evidence="5">
    <location>
        <begin position="288"/>
        <end position="305"/>
    </location>
</feature>
<feature type="strand" evidence="5">
    <location>
        <begin position="309"/>
        <end position="313"/>
    </location>
</feature>
<feature type="helix" evidence="5">
    <location>
        <begin position="318"/>
        <end position="320"/>
    </location>
</feature>
<feature type="turn" evidence="5">
    <location>
        <begin position="321"/>
        <end position="324"/>
    </location>
</feature>
<feature type="strand" evidence="5">
    <location>
        <begin position="325"/>
        <end position="329"/>
    </location>
</feature>
<feature type="turn" evidence="5">
    <location>
        <begin position="335"/>
        <end position="337"/>
    </location>
</feature>
<feature type="helix" evidence="5">
    <location>
        <begin position="342"/>
        <end position="345"/>
    </location>
</feature>
<feature type="helix" evidence="5">
    <location>
        <begin position="346"/>
        <end position="350"/>
    </location>
</feature>
<protein>
    <recommendedName>
        <fullName>Arabinogalactan endo-beta-1,4-galactanase A</fullName>
        <ecNumber>3.2.1.89</ecNumber>
    </recommendedName>
    <alternativeName>
        <fullName>Endo-1,4-beta-galactanase A</fullName>
        <shortName>Galactanase A</shortName>
    </alternativeName>
</protein>
<gene>
    <name type="primary">galA</name>
    <name type="ORF">AN5727</name>
</gene>
<name>GANA_EMENI</name>
<dbReference type="EC" id="3.2.1.89"/>
<dbReference type="EMBL" id="DQ490498">
    <property type="protein sequence ID" value="ABF50874.1"/>
    <property type="molecule type" value="mRNA"/>
</dbReference>
<dbReference type="EMBL" id="AACD01000098">
    <property type="protein sequence ID" value="EAA62820.1"/>
    <property type="status" value="ALT_SEQ"/>
    <property type="molecule type" value="Genomic_DNA"/>
</dbReference>
<dbReference type="EMBL" id="BN001305">
    <property type="protein sequence ID" value="CBF81324.1"/>
    <property type="status" value="ALT_SEQ"/>
    <property type="molecule type" value="Genomic_DNA"/>
</dbReference>
<dbReference type="RefSeq" id="XP_663331.1">
    <property type="nucleotide sequence ID" value="XM_658239.1"/>
</dbReference>
<dbReference type="PDB" id="4BF7">
    <property type="method" value="X-ray"/>
    <property type="resolution" value="2.00 A"/>
    <property type="chains" value="A=1-350"/>
</dbReference>
<dbReference type="PDBsum" id="4BF7"/>
<dbReference type="SMR" id="Q5B153"/>
<dbReference type="STRING" id="227321.Q5B153"/>
<dbReference type="CAZy" id="GH53">
    <property type="family name" value="Glycoside Hydrolase Family 53"/>
</dbReference>
<dbReference type="GlyCosmos" id="Q5B153">
    <property type="glycosylation" value="1 site, No reported glycans"/>
</dbReference>
<dbReference type="KEGG" id="ani:ANIA_05727"/>
<dbReference type="VEuPathDB" id="FungiDB:AN5727"/>
<dbReference type="eggNOG" id="ENOG502QU6R">
    <property type="taxonomic scope" value="Eukaryota"/>
</dbReference>
<dbReference type="HOGENOM" id="CLU_011259_0_0_1"/>
<dbReference type="InParanoid" id="Q5B153"/>
<dbReference type="OrthoDB" id="110914at2759"/>
<dbReference type="EvolutionaryTrace" id="Q5B153"/>
<dbReference type="Proteomes" id="UP000000560">
    <property type="component" value="Chromosome V"/>
</dbReference>
<dbReference type="GO" id="GO:0005576">
    <property type="term" value="C:extracellular region"/>
    <property type="evidence" value="ECO:0000250"/>
    <property type="project" value="UniProtKB"/>
</dbReference>
<dbReference type="GO" id="GO:0031218">
    <property type="term" value="F:arabinogalactan endo-1,4-beta-galactosidase activity"/>
    <property type="evidence" value="ECO:0000314"/>
    <property type="project" value="UniProtKB"/>
</dbReference>
<dbReference type="GO" id="GO:0015926">
    <property type="term" value="F:glucosidase activity"/>
    <property type="evidence" value="ECO:0007669"/>
    <property type="project" value="InterPro"/>
</dbReference>
<dbReference type="GO" id="GO:0071555">
    <property type="term" value="P:cell wall organization"/>
    <property type="evidence" value="ECO:0007669"/>
    <property type="project" value="UniProtKB-KW"/>
</dbReference>
<dbReference type="GO" id="GO:0045490">
    <property type="term" value="P:pectin catabolic process"/>
    <property type="evidence" value="ECO:0000314"/>
    <property type="project" value="UniProtKB"/>
</dbReference>
<dbReference type="FunFam" id="3.20.20.80:FF:000077">
    <property type="entry name" value="Arabinogalactan endo-beta-1,4-galactanase"/>
    <property type="match status" value="1"/>
</dbReference>
<dbReference type="Gene3D" id="3.20.20.80">
    <property type="entry name" value="Glycosidases"/>
    <property type="match status" value="1"/>
</dbReference>
<dbReference type="InterPro" id="IPR011683">
    <property type="entry name" value="Glyco_hydro_53"/>
</dbReference>
<dbReference type="InterPro" id="IPR017853">
    <property type="entry name" value="Glycoside_hydrolase_SF"/>
</dbReference>
<dbReference type="PANTHER" id="PTHR34983">
    <property type="entry name" value="ARABINOGALACTAN ENDO-BETA-1,4-GALACTANASE A"/>
    <property type="match status" value="1"/>
</dbReference>
<dbReference type="PANTHER" id="PTHR34983:SF1">
    <property type="entry name" value="ARABINOGALACTAN ENDO-BETA-1,4-GALACTANASE A"/>
    <property type="match status" value="1"/>
</dbReference>
<dbReference type="Pfam" id="PF07745">
    <property type="entry name" value="Glyco_hydro_53"/>
    <property type="match status" value="1"/>
</dbReference>
<dbReference type="SUPFAM" id="SSF51445">
    <property type="entry name" value="(Trans)glycosidases"/>
    <property type="match status" value="1"/>
</dbReference>
<sequence length="350" mass="38572">MILSSLLPLSLVTLTSAALTYRGADISSLLIEEDSGVAYKNLNGETQAFELILANNGVNSIRQRIWVNPSDGSYNLEYNLELAKRVQDAGMSVYLDLHLSDTWADPGDQATPSGWSTTDIDTLAWQVYNYTLDVCNTFAENNVAVEIVSIGNEIRNGLLHPLGSTDHYDNIARLLHSGAWGVKDSSLSTTPKILFHLDNGWDWDAQKYFYDTVLATGTLLSTDFDLIGVSYYPFYNADATLSSLKTSLTNLKSNYGKNVLVVETDWPVQCSSPEYAFPSDLSSIPFSADGQETFLGRLADTLEDVGGVGIYYWEPGWVDNAGLGSSCEDNLMVDWRDRTVRESISVFGDL</sequence>
<comment type="function">
    <text evidence="3">Endogalactanase involved in the degradation of plant cell wall polysaccharides, and more particularly of hairy regions of pectin.</text>
</comment>
<comment type="catalytic activity">
    <reaction>
        <text>The enzyme specifically hydrolyzes (1-&gt;4)-beta-D-galactosidic linkages in type I arabinogalactans.</text>
        <dbReference type="EC" id="3.2.1.89"/>
    </reaction>
</comment>
<comment type="biophysicochemical properties">
    <phDependence>
        <text evidence="3">Optimum pH is 5.0.</text>
    </phDependence>
</comment>
<comment type="subcellular location">
    <subcellularLocation>
        <location evidence="1">Secreted</location>
    </subcellularLocation>
</comment>
<comment type="similarity">
    <text evidence="4">Belongs to the glycosyl hydrolase 53 family.</text>
</comment>
<comment type="sequence caution" evidence="4">
    <conflict type="erroneous gene model prediction">
        <sequence resource="EMBL-CDS" id="CBF81324"/>
    </conflict>
</comment>
<comment type="sequence caution" evidence="4">
    <conflict type="erroneous gene model prediction">
        <sequence resource="EMBL-CDS" id="EAA62820"/>
    </conflict>
</comment>
<evidence type="ECO:0000250" key="1"/>
<evidence type="ECO:0000255" key="2"/>
<evidence type="ECO:0000269" key="3">
    <source>
    </source>
</evidence>
<evidence type="ECO:0000305" key="4"/>
<evidence type="ECO:0007829" key="5">
    <source>
        <dbReference type="PDB" id="4BF7"/>
    </source>
</evidence>
<organism>
    <name type="scientific">Emericella nidulans (strain FGSC A4 / ATCC 38163 / CBS 112.46 / NRRL 194 / M139)</name>
    <name type="common">Aspergillus nidulans</name>
    <dbReference type="NCBI Taxonomy" id="227321"/>
    <lineage>
        <taxon>Eukaryota</taxon>
        <taxon>Fungi</taxon>
        <taxon>Dikarya</taxon>
        <taxon>Ascomycota</taxon>
        <taxon>Pezizomycotina</taxon>
        <taxon>Eurotiomycetes</taxon>
        <taxon>Eurotiomycetidae</taxon>
        <taxon>Eurotiales</taxon>
        <taxon>Aspergillaceae</taxon>
        <taxon>Aspergillus</taxon>
        <taxon>Aspergillus subgen. Nidulantes</taxon>
    </lineage>
</organism>
<keyword id="KW-0002">3D-structure</keyword>
<keyword id="KW-0119">Carbohydrate metabolism</keyword>
<keyword id="KW-0961">Cell wall biogenesis/degradation</keyword>
<keyword id="KW-0325">Glycoprotein</keyword>
<keyword id="KW-0326">Glycosidase</keyword>
<keyword id="KW-0378">Hydrolase</keyword>
<keyword id="KW-0624">Polysaccharide degradation</keyword>
<keyword id="KW-1185">Reference proteome</keyword>
<keyword id="KW-0964">Secreted</keyword>
<keyword id="KW-0732">Signal</keyword>
<reference key="1">
    <citation type="journal article" date="2006" name="Proc. Natl. Acad. Sci. U.S.A.">
        <title>Development and application of a suite of polysaccharide-degrading enzymes for analyzing plant cell walls.</title>
        <authorList>
            <person name="Bauer S."/>
            <person name="Vasu P."/>
            <person name="Persson S."/>
            <person name="Mort A.J."/>
            <person name="Somerville C.R."/>
        </authorList>
    </citation>
    <scope>NUCLEOTIDE SEQUENCE [MRNA]</scope>
    <scope>FUNCTION</scope>
    <scope>BIOPHYSICOCHEMICAL PROPERTIES</scope>
    <source>
        <strain>FGSC A4 / ATCC 38163 / CBS 112.46 / NRRL 194 / M139</strain>
    </source>
</reference>
<reference key="2">
    <citation type="journal article" date="2005" name="Nature">
        <title>Sequencing of Aspergillus nidulans and comparative analysis with A. fumigatus and A. oryzae.</title>
        <authorList>
            <person name="Galagan J.E."/>
            <person name="Calvo S.E."/>
            <person name="Cuomo C."/>
            <person name="Ma L.-J."/>
            <person name="Wortman J.R."/>
            <person name="Batzoglou S."/>
            <person name="Lee S.-I."/>
            <person name="Bastuerkmen M."/>
            <person name="Spevak C.C."/>
            <person name="Clutterbuck J."/>
            <person name="Kapitonov V."/>
            <person name="Jurka J."/>
            <person name="Scazzocchio C."/>
            <person name="Farman M.L."/>
            <person name="Butler J."/>
            <person name="Purcell S."/>
            <person name="Harris S."/>
            <person name="Braus G.H."/>
            <person name="Draht O."/>
            <person name="Busch S."/>
            <person name="D'Enfert C."/>
            <person name="Bouchier C."/>
            <person name="Goldman G.H."/>
            <person name="Bell-Pedersen D."/>
            <person name="Griffiths-Jones S."/>
            <person name="Doonan J.H."/>
            <person name="Yu J."/>
            <person name="Vienken K."/>
            <person name="Pain A."/>
            <person name="Freitag M."/>
            <person name="Selker E.U."/>
            <person name="Archer D.B."/>
            <person name="Penalva M.A."/>
            <person name="Oakley B.R."/>
            <person name="Momany M."/>
            <person name="Tanaka T."/>
            <person name="Kumagai T."/>
            <person name="Asai K."/>
            <person name="Machida M."/>
            <person name="Nierman W.C."/>
            <person name="Denning D.W."/>
            <person name="Caddick M.X."/>
            <person name="Hynes M."/>
            <person name="Paoletti M."/>
            <person name="Fischer R."/>
            <person name="Miller B.L."/>
            <person name="Dyer P.S."/>
            <person name="Sachs M.S."/>
            <person name="Osmani S.A."/>
            <person name="Birren B.W."/>
        </authorList>
    </citation>
    <scope>NUCLEOTIDE SEQUENCE [LARGE SCALE GENOMIC DNA]</scope>
    <source>
        <strain>FGSC A4 / ATCC 38163 / CBS 112.46 / NRRL 194 / M139</strain>
    </source>
</reference>
<reference key="3">
    <citation type="journal article" date="2009" name="Fungal Genet. Biol.">
        <title>The 2008 update of the Aspergillus nidulans genome annotation: a community effort.</title>
        <authorList>
            <person name="Wortman J.R."/>
            <person name="Gilsenan J.M."/>
            <person name="Joardar V."/>
            <person name="Deegan J."/>
            <person name="Clutterbuck J."/>
            <person name="Andersen M.R."/>
            <person name="Archer D."/>
            <person name="Bencina M."/>
            <person name="Braus G."/>
            <person name="Coutinho P."/>
            <person name="von Dohren H."/>
            <person name="Doonan J."/>
            <person name="Driessen A.J."/>
            <person name="Durek P."/>
            <person name="Espeso E."/>
            <person name="Fekete E."/>
            <person name="Flipphi M."/>
            <person name="Estrada C.G."/>
            <person name="Geysens S."/>
            <person name="Goldman G."/>
            <person name="de Groot P.W."/>
            <person name="Hansen K."/>
            <person name="Harris S.D."/>
            <person name="Heinekamp T."/>
            <person name="Helmstaedt K."/>
            <person name="Henrissat B."/>
            <person name="Hofmann G."/>
            <person name="Homan T."/>
            <person name="Horio T."/>
            <person name="Horiuchi H."/>
            <person name="James S."/>
            <person name="Jones M."/>
            <person name="Karaffa L."/>
            <person name="Karanyi Z."/>
            <person name="Kato M."/>
            <person name="Keller N."/>
            <person name="Kelly D.E."/>
            <person name="Kiel J.A."/>
            <person name="Kim J.M."/>
            <person name="van der Klei I.J."/>
            <person name="Klis F.M."/>
            <person name="Kovalchuk A."/>
            <person name="Krasevec N."/>
            <person name="Kubicek C.P."/>
            <person name="Liu B."/>
            <person name="Maccabe A."/>
            <person name="Meyer V."/>
            <person name="Mirabito P."/>
            <person name="Miskei M."/>
            <person name="Mos M."/>
            <person name="Mullins J."/>
            <person name="Nelson D.R."/>
            <person name="Nielsen J."/>
            <person name="Oakley B.R."/>
            <person name="Osmani S.A."/>
            <person name="Pakula T."/>
            <person name="Paszewski A."/>
            <person name="Paulsen I."/>
            <person name="Pilsyk S."/>
            <person name="Pocsi I."/>
            <person name="Punt P.J."/>
            <person name="Ram A.F."/>
            <person name="Ren Q."/>
            <person name="Robellet X."/>
            <person name="Robson G."/>
            <person name="Seiboth B."/>
            <person name="van Solingen P."/>
            <person name="Specht T."/>
            <person name="Sun J."/>
            <person name="Taheri-Talesh N."/>
            <person name="Takeshita N."/>
            <person name="Ussery D."/>
            <person name="vanKuyk P.A."/>
            <person name="Visser H."/>
            <person name="van de Vondervoort P.J."/>
            <person name="de Vries R.P."/>
            <person name="Walton J."/>
            <person name="Xiang X."/>
            <person name="Xiong Y."/>
            <person name="Zeng A.P."/>
            <person name="Brandt B.W."/>
            <person name="Cornell M.J."/>
            <person name="van den Hondel C.A."/>
            <person name="Visser J."/>
            <person name="Oliver S.G."/>
            <person name="Turner G."/>
        </authorList>
    </citation>
    <scope>GENOME REANNOTATION</scope>
    <source>
        <strain>FGSC A4 / ATCC 38163 / CBS 112.46 / NRRL 194 / M139</strain>
    </source>
</reference>